<comment type="function">
    <text evidence="1">Involved in the active translocation of vitamin B12 (cyanocobalamin) across the outer membrane to the periplasmic space. It derives its energy for transport by interacting with the trans-periplasmic membrane protein TonB.</text>
</comment>
<comment type="subcellular location">
    <subcellularLocation>
        <location evidence="1">Cell outer membrane</location>
        <topology evidence="1">Multi-pass membrane protein</topology>
    </subcellularLocation>
</comment>
<comment type="similarity">
    <text evidence="1">Belongs to the TonB-dependent receptor family. BtuB (TC 1.B.14.3.1) subfamily.</text>
</comment>
<proteinExistence type="inferred from homology"/>
<feature type="signal peptide" evidence="1">
    <location>
        <begin position="1"/>
        <end position="25"/>
    </location>
</feature>
<feature type="chain" id="PRO_0000003484" description="Vitamin B12 transporter BtuB">
    <location>
        <begin position="26"/>
        <end position="619"/>
    </location>
</feature>
<feature type="transmembrane region" description="Beta stranded" evidence="1">
    <location>
        <begin position="163"/>
        <end position="170"/>
    </location>
</feature>
<feature type="transmembrane region" description="Beta stranded" evidence="1">
    <location>
        <begin position="174"/>
        <end position="183"/>
    </location>
</feature>
<feature type="transmembrane region" description="Beta stranded" evidence="1">
    <location>
        <begin position="189"/>
        <end position="200"/>
    </location>
</feature>
<feature type="transmembrane region" description="Beta stranded" evidence="1">
    <location>
        <begin position="222"/>
        <end position="232"/>
    </location>
</feature>
<feature type="transmembrane region" description="Beta stranded" evidence="1">
    <location>
        <begin position="237"/>
        <end position="253"/>
    </location>
</feature>
<feature type="transmembrane region" description="Beta stranded" evidence="1">
    <location>
        <begin position="270"/>
        <end position="284"/>
    </location>
</feature>
<feature type="transmembrane region" description="Beta stranded" evidence="1">
    <location>
        <begin position="286"/>
        <end position="303"/>
    </location>
</feature>
<feature type="transmembrane region" description="Beta stranded" evidence="1">
    <location>
        <begin position="316"/>
        <end position="332"/>
    </location>
</feature>
<feature type="transmembrane region" description="Beta stranded" evidence="1">
    <location>
        <begin position="335"/>
        <end position="344"/>
    </location>
</feature>
<feature type="transmembrane region" description="Beta stranded" evidence="1">
    <location>
        <begin position="360"/>
        <end position="376"/>
    </location>
</feature>
<feature type="transmembrane region" description="Beta stranded" evidence="1">
    <location>
        <begin position="378"/>
        <end position="388"/>
    </location>
</feature>
<feature type="transmembrane region" description="Beta stranded" evidence="1">
    <location>
        <begin position="392"/>
        <end position="407"/>
    </location>
</feature>
<feature type="transmembrane region" description="Beta stranded" evidence="1">
    <location>
        <begin position="410"/>
        <end position="424"/>
    </location>
</feature>
<feature type="transmembrane region" description="Beta stranded" evidence="1">
    <location>
        <begin position="441"/>
        <end position="450"/>
    </location>
</feature>
<feature type="transmembrane region" description="Beta stranded" evidence="1">
    <location>
        <begin position="456"/>
        <end position="465"/>
    </location>
</feature>
<feature type="transmembrane region" description="Beta stranded" evidence="1">
    <location>
        <begin position="478"/>
        <end position="495"/>
    </location>
</feature>
<feature type="transmembrane region" description="Beta stranded" evidence="1">
    <location>
        <begin position="499"/>
        <end position="514"/>
    </location>
</feature>
<feature type="transmembrane region" description="Beta stranded" evidence="1">
    <location>
        <begin position="522"/>
        <end position="534"/>
    </location>
</feature>
<feature type="transmembrane region" description="Beta stranded" evidence="1">
    <location>
        <begin position="540"/>
        <end position="556"/>
    </location>
</feature>
<feature type="transmembrane region" description="Beta stranded" evidence="1">
    <location>
        <begin position="563"/>
        <end position="577"/>
    </location>
</feature>
<feature type="transmembrane region" description="Beta stranded" evidence="1">
    <location>
        <begin position="590"/>
        <end position="601"/>
    </location>
</feature>
<feature type="transmembrane region" description="Beta stranded" evidence="1">
    <location>
        <begin position="607"/>
        <end position="619"/>
    </location>
</feature>
<feature type="domain" description="TBDR plug" evidence="2">
    <location>
        <begin position="43"/>
        <end position="157"/>
    </location>
</feature>
<feature type="domain" description="TBDR beta-barrel" evidence="2">
    <location>
        <begin position="160"/>
        <end position="619"/>
    </location>
</feature>
<feature type="short sequence motif" description="TonB box">
    <location>
        <begin position="31"/>
        <end position="38"/>
    </location>
</feature>
<feature type="short sequence motif" description="TonB C-terminal box">
    <location>
        <begin position="602"/>
        <end position="619"/>
    </location>
</feature>
<feature type="binding site" evidence="1">
    <location>
        <position position="88"/>
    </location>
    <ligand>
        <name>cyanocob(III)alamin</name>
        <dbReference type="ChEBI" id="CHEBI:17439"/>
    </ligand>
</feature>
<feature type="binding site" evidence="1">
    <location>
        <position position="90"/>
    </location>
    <ligand>
        <name>cyanocob(III)alamin</name>
        <dbReference type="ChEBI" id="CHEBI:17439"/>
    </ligand>
</feature>
<feature type="binding site" evidence="1">
    <location>
        <begin position="115"/>
        <end position="116"/>
    </location>
    <ligand>
        <name>cyanocob(III)alamin</name>
        <dbReference type="ChEBI" id="CHEBI:17439"/>
    </ligand>
</feature>
<feature type="binding site" evidence="1">
    <location>
        <position position="204"/>
    </location>
    <ligand>
        <name>Ca(2+)</name>
        <dbReference type="ChEBI" id="CHEBI:29108"/>
        <label>1</label>
    </ligand>
</feature>
<feature type="binding site" evidence="1">
    <location>
        <position position="216"/>
    </location>
    <ligand>
        <name>Ca(2+)</name>
        <dbReference type="ChEBI" id="CHEBI:29108"/>
        <label>1</label>
    </ligand>
</feature>
<feature type="binding site" evidence="1">
    <location>
        <position position="218"/>
    </location>
    <ligand>
        <name>Ca(2+)</name>
        <dbReference type="ChEBI" id="CHEBI:29108"/>
        <label>1</label>
    </ligand>
</feature>
<feature type="binding site" evidence="1">
    <location>
        <position position="218"/>
    </location>
    <ligand>
        <name>Ca(2+)</name>
        <dbReference type="ChEBI" id="CHEBI:29108"/>
        <label>2</label>
    </ligand>
</feature>
<feature type="binding site" evidence="1">
    <location>
        <position position="220"/>
    </location>
    <ligand>
        <name>Ca(2+)</name>
        <dbReference type="ChEBI" id="CHEBI:29108"/>
        <label>1</label>
    </ligand>
</feature>
<feature type="binding site" evidence="1">
    <location>
        <position position="220"/>
    </location>
    <ligand>
        <name>Ca(2+)</name>
        <dbReference type="ChEBI" id="CHEBI:29108"/>
        <label>2</label>
    </ligand>
</feature>
<feature type="binding site" evidence="1">
    <location>
        <position position="254"/>
    </location>
    <ligand>
        <name>Ca(2+)</name>
        <dbReference type="ChEBI" id="CHEBI:29108"/>
        <label>2</label>
    </ligand>
</feature>
<feature type="binding site" evidence="1">
    <location>
        <position position="255"/>
    </location>
    <ligand>
        <name>Ca(2+)</name>
        <dbReference type="ChEBI" id="CHEBI:29108"/>
        <label>1</label>
    </ligand>
</feature>
<feature type="binding site" evidence="1">
    <location>
        <position position="255"/>
    </location>
    <ligand>
        <name>Ca(2+)</name>
        <dbReference type="ChEBI" id="CHEBI:29108"/>
        <label>2</label>
    </ligand>
</feature>
<feature type="binding site" evidence="1">
    <location>
        <position position="256"/>
    </location>
    <ligand>
        <name>cyanocob(III)alamin</name>
        <dbReference type="ChEBI" id="CHEBI:17439"/>
    </ligand>
</feature>
<feature type="binding site" evidence="1">
    <location>
        <position position="268"/>
    </location>
    <ligand>
        <name>Ca(2+)</name>
        <dbReference type="ChEBI" id="CHEBI:29108"/>
        <label>2</label>
    </ligand>
</feature>
<feature type="binding site" evidence="1">
    <location>
        <position position="316"/>
    </location>
    <ligand>
        <name>cyanocob(III)alamin</name>
        <dbReference type="ChEBI" id="CHEBI:17439"/>
    </ligand>
</feature>
<feature type="binding site" evidence="1">
    <location>
        <position position="522"/>
    </location>
    <ligand>
        <name>cyanocob(III)alamin</name>
        <dbReference type="ChEBI" id="CHEBI:17439"/>
    </ligand>
</feature>
<evidence type="ECO:0000255" key="1">
    <source>
        <dbReference type="HAMAP-Rule" id="MF_01531"/>
    </source>
</evidence>
<evidence type="ECO:0000255" key="2">
    <source>
        <dbReference type="PROSITE-ProRule" id="PRU01360"/>
    </source>
</evidence>
<sequence length="619" mass="70154">MINKKRLLLSTVSIMVISGWNQASAAVESQDSLVVTASRFKQPISSILAPYTVVTRDEIDRWQSNSVADILRRLPGVDIARHGGIGQLSSLFIRGTHASHVLVLMDGIRLNQAGISGSSDLSQIPVSLVQKIEYIRGPRSAVYGSDAIGGVINIITTREKLGTSLNVGIGSHGYQTYDGATQQTLAENTVLTAAANYTYTKGYDVVADGNTGGFRQPDRDGFMSKMLWLGVDQKFNEQVSGFVRAYGYNNRTSYDADINWSYPYARPDTRELYSRHYDMGVRFNQGIYSSQLITSYSHTKDYNFDPQYGRYDKSASLNDSEQYNLQWGNTFQLYQGIVSTGVDFQKQSIEAGTSYIPKSKTVRNTGMYLTAQQQLKDFILEGAIRSDKHSEAGWNTTWQASLGWEFIKDYRLIASYGTAFKAPTLSQMYGFGGNHDLKPEESKQWEGGIEGVTGQLTWRMTVYRNEIEQLIDYANSRYYNIGKAKIKGVEWTGLIDTGMFQHQLTIQYIDPRNSETNEILVRRAKQQVKYQLDWQLYDFDWGLTYQYLGRRYDKDFSTSPAKRVKLGGVSFWDLTVSYPVTSYLTIRARIANLLDKDYETVYGYRIPGREYYLTGSYNF</sequence>
<accession>Q7MYE3</accession>
<name>BTUB_PHOLL</name>
<protein>
    <recommendedName>
        <fullName evidence="1">Vitamin B12 transporter BtuB</fullName>
    </recommendedName>
    <alternativeName>
        <fullName evidence="1">Cobalamin receptor</fullName>
    </alternativeName>
    <alternativeName>
        <fullName evidence="1">Outer membrane cobalamin translocator</fullName>
    </alternativeName>
</protein>
<reference key="1">
    <citation type="journal article" date="2003" name="Nat. Biotechnol.">
        <title>The genome sequence of the entomopathogenic bacterium Photorhabdus luminescens.</title>
        <authorList>
            <person name="Duchaud E."/>
            <person name="Rusniok C."/>
            <person name="Frangeul L."/>
            <person name="Buchrieser C."/>
            <person name="Givaudan A."/>
            <person name="Taourit S."/>
            <person name="Bocs S."/>
            <person name="Boursaux-Eude C."/>
            <person name="Chandler M."/>
            <person name="Charles J.-F."/>
            <person name="Dassa E."/>
            <person name="Derose R."/>
            <person name="Derzelle S."/>
            <person name="Freyssinet G."/>
            <person name="Gaudriault S."/>
            <person name="Medigue C."/>
            <person name="Lanois A."/>
            <person name="Powell K."/>
            <person name="Siguier P."/>
            <person name="Vincent R."/>
            <person name="Wingate V."/>
            <person name="Zouine M."/>
            <person name="Glaser P."/>
            <person name="Boemare N."/>
            <person name="Danchin A."/>
            <person name="Kunst F."/>
        </authorList>
    </citation>
    <scope>NUCLEOTIDE SEQUENCE [LARGE SCALE GENOMIC DNA]</scope>
    <source>
        <strain>DSM 15139 / CIP 105565 / TT01</strain>
    </source>
</reference>
<organism>
    <name type="scientific">Photorhabdus laumondii subsp. laumondii (strain DSM 15139 / CIP 105565 / TT01)</name>
    <name type="common">Photorhabdus luminescens subsp. laumondii</name>
    <dbReference type="NCBI Taxonomy" id="243265"/>
    <lineage>
        <taxon>Bacteria</taxon>
        <taxon>Pseudomonadati</taxon>
        <taxon>Pseudomonadota</taxon>
        <taxon>Gammaproteobacteria</taxon>
        <taxon>Enterobacterales</taxon>
        <taxon>Morganellaceae</taxon>
        <taxon>Photorhabdus</taxon>
    </lineage>
</organism>
<keyword id="KW-0106">Calcium</keyword>
<keyword id="KW-0998">Cell outer membrane</keyword>
<keyword id="KW-0406">Ion transport</keyword>
<keyword id="KW-0472">Membrane</keyword>
<keyword id="KW-0479">Metal-binding</keyword>
<keyword id="KW-0626">Porin</keyword>
<keyword id="KW-1185">Reference proteome</keyword>
<keyword id="KW-0732">Signal</keyword>
<keyword id="KW-0798">TonB box</keyword>
<keyword id="KW-0812">Transmembrane</keyword>
<keyword id="KW-1134">Transmembrane beta strand</keyword>
<keyword id="KW-0813">Transport</keyword>
<dbReference type="EMBL" id="BX571874">
    <property type="protein sequence ID" value="CAE17107.1"/>
    <property type="molecule type" value="Genomic_DNA"/>
</dbReference>
<dbReference type="RefSeq" id="WP_011148803.1">
    <property type="nucleotide sequence ID" value="NC_005126.1"/>
</dbReference>
<dbReference type="SMR" id="Q7MYE3"/>
<dbReference type="STRING" id="243265.plu4735"/>
<dbReference type="GeneID" id="48850970"/>
<dbReference type="KEGG" id="plu:plu4735"/>
<dbReference type="eggNOG" id="COG4206">
    <property type="taxonomic scope" value="Bacteria"/>
</dbReference>
<dbReference type="HOGENOM" id="CLU_008287_18_5_6"/>
<dbReference type="OrthoDB" id="9764669at2"/>
<dbReference type="Proteomes" id="UP000002514">
    <property type="component" value="Chromosome"/>
</dbReference>
<dbReference type="GO" id="GO:0009279">
    <property type="term" value="C:cell outer membrane"/>
    <property type="evidence" value="ECO:0007669"/>
    <property type="project" value="UniProtKB-SubCell"/>
</dbReference>
<dbReference type="GO" id="GO:0046930">
    <property type="term" value="C:pore complex"/>
    <property type="evidence" value="ECO:0007669"/>
    <property type="project" value="UniProtKB-KW"/>
</dbReference>
<dbReference type="GO" id="GO:0015420">
    <property type="term" value="F:ABC-type vitamin B12 transporter activity"/>
    <property type="evidence" value="ECO:0007669"/>
    <property type="project" value="InterPro"/>
</dbReference>
<dbReference type="GO" id="GO:0046872">
    <property type="term" value="F:metal ion binding"/>
    <property type="evidence" value="ECO:0007669"/>
    <property type="project" value="UniProtKB-KW"/>
</dbReference>
<dbReference type="GO" id="GO:0015288">
    <property type="term" value="F:porin activity"/>
    <property type="evidence" value="ECO:0007669"/>
    <property type="project" value="UniProtKB-KW"/>
</dbReference>
<dbReference type="GO" id="GO:0006811">
    <property type="term" value="P:monoatomic ion transport"/>
    <property type="evidence" value="ECO:0007669"/>
    <property type="project" value="UniProtKB-KW"/>
</dbReference>
<dbReference type="CDD" id="cd01347">
    <property type="entry name" value="ligand_gated_channel"/>
    <property type="match status" value="1"/>
</dbReference>
<dbReference type="FunFam" id="2.170.130.10:FF:000002">
    <property type="entry name" value="Vitamin B12 transporter BtuB"/>
    <property type="match status" value="1"/>
</dbReference>
<dbReference type="Gene3D" id="2.40.170.20">
    <property type="entry name" value="TonB-dependent receptor, beta-barrel domain"/>
    <property type="match status" value="1"/>
</dbReference>
<dbReference type="Gene3D" id="2.170.130.10">
    <property type="entry name" value="TonB-dependent receptor, plug domain"/>
    <property type="match status" value="1"/>
</dbReference>
<dbReference type="HAMAP" id="MF_01531">
    <property type="entry name" value="BtuB"/>
    <property type="match status" value="1"/>
</dbReference>
<dbReference type="InterPro" id="IPR010101">
    <property type="entry name" value="B12_transptr_BtuB"/>
</dbReference>
<dbReference type="InterPro" id="IPR012910">
    <property type="entry name" value="Plug_dom"/>
</dbReference>
<dbReference type="InterPro" id="IPR037066">
    <property type="entry name" value="Plug_dom_sf"/>
</dbReference>
<dbReference type="InterPro" id="IPR039426">
    <property type="entry name" value="TonB-dep_rcpt-like"/>
</dbReference>
<dbReference type="InterPro" id="IPR000531">
    <property type="entry name" value="TonB-dep_rcpt_b-brl"/>
</dbReference>
<dbReference type="InterPro" id="IPR010916">
    <property type="entry name" value="TonB_box_CS"/>
</dbReference>
<dbReference type="InterPro" id="IPR036942">
    <property type="entry name" value="TonB_rcpt_b-brl_sf"/>
</dbReference>
<dbReference type="NCBIfam" id="NF007926">
    <property type="entry name" value="PRK10641.1"/>
    <property type="match status" value="1"/>
</dbReference>
<dbReference type="NCBIfam" id="TIGR01779">
    <property type="entry name" value="TonB-B12"/>
    <property type="match status" value="1"/>
</dbReference>
<dbReference type="PANTHER" id="PTHR30069:SF53">
    <property type="entry name" value="COLICIN I RECEPTOR-RELATED"/>
    <property type="match status" value="1"/>
</dbReference>
<dbReference type="PANTHER" id="PTHR30069">
    <property type="entry name" value="TONB-DEPENDENT OUTER MEMBRANE RECEPTOR"/>
    <property type="match status" value="1"/>
</dbReference>
<dbReference type="Pfam" id="PF07715">
    <property type="entry name" value="Plug"/>
    <property type="match status" value="1"/>
</dbReference>
<dbReference type="Pfam" id="PF00593">
    <property type="entry name" value="TonB_dep_Rec_b-barrel"/>
    <property type="match status" value="1"/>
</dbReference>
<dbReference type="SUPFAM" id="SSF56935">
    <property type="entry name" value="Porins"/>
    <property type="match status" value="1"/>
</dbReference>
<dbReference type="PROSITE" id="PS00430">
    <property type="entry name" value="TONB_DEPENDENT_REC_1"/>
    <property type="match status" value="1"/>
</dbReference>
<dbReference type="PROSITE" id="PS52016">
    <property type="entry name" value="TONB_DEPENDENT_REC_3"/>
    <property type="match status" value="1"/>
</dbReference>
<gene>
    <name evidence="1" type="primary">btuB</name>
    <name type="ordered locus">plu4735</name>
</gene>